<reference key="1">
    <citation type="journal article" date="2008" name="BMC Genomics">
        <title>The linear chromosome of the plant-pathogenic mycoplasma 'Candidatus Phytoplasma mali'.</title>
        <authorList>
            <person name="Kube M."/>
            <person name="Schneider B."/>
            <person name="Kuhl H."/>
            <person name="Dandekar T."/>
            <person name="Heitmann K."/>
            <person name="Migdoll A.M."/>
            <person name="Reinhardt R."/>
            <person name="Seemueller E."/>
        </authorList>
    </citation>
    <scope>NUCLEOTIDE SEQUENCE [LARGE SCALE GENOMIC DNA]</scope>
    <source>
        <strain>AT</strain>
    </source>
</reference>
<dbReference type="EMBL" id="CU469464">
    <property type="protein sequence ID" value="CAP18465.1"/>
    <property type="molecule type" value="Genomic_DNA"/>
</dbReference>
<dbReference type="SMR" id="B3QZS8"/>
<dbReference type="STRING" id="37692.ATP_00278"/>
<dbReference type="KEGG" id="pml:ATP_00278"/>
<dbReference type="eggNOG" id="COG0227">
    <property type="taxonomic scope" value="Bacteria"/>
</dbReference>
<dbReference type="HOGENOM" id="CLU_064548_7_1_14"/>
<dbReference type="Proteomes" id="UP000002020">
    <property type="component" value="Chromosome"/>
</dbReference>
<dbReference type="GO" id="GO:1990904">
    <property type="term" value="C:ribonucleoprotein complex"/>
    <property type="evidence" value="ECO:0007669"/>
    <property type="project" value="UniProtKB-KW"/>
</dbReference>
<dbReference type="GO" id="GO:0005840">
    <property type="term" value="C:ribosome"/>
    <property type="evidence" value="ECO:0007669"/>
    <property type="project" value="UniProtKB-KW"/>
</dbReference>
<dbReference type="GO" id="GO:0003735">
    <property type="term" value="F:structural constituent of ribosome"/>
    <property type="evidence" value="ECO:0007669"/>
    <property type="project" value="InterPro"/>
</dbReference>
<dbReference type="GO" id="GO:0006412">
    <property type="term" value="P:translation"/>
    <property type="evidence" value="ECO:0007669"/>
    <property type="project" value="UniProtKB-UniRule"/>
</dbReference>
<dbReference type="Gene3D" id="2.30.170.40">
    <property type="entry name" value="Ribosomal protein L28/L24"/>
    <property type="match status" value="1"/>
</dbReference>
<dbReference type="HAMAP" id="MF_00373">
    <property type="entry name" value="Ribosomal_bL28"/>
    <property type="match status" value="1"/>
</dbReference>
<dbReference type="InterPro" id="IPR050096">
    <property type="entry name" value="Bacterial_rp_bL28"/>
</dbReference>
<dbReference type="InterPro" id="IPR026569">
    <property type="entry name" value="Ribosomal_bL28"/>
</dbReference>
<dbReference type="InterPro" id="IPR034704">
    <property type="entry name" value="Ribosomal_bL28/bL31-like_sf"/>
</dbReference>
<dbReference type="InterPro" id="IPR001383">
    <property type="entry name" value="Ribosomal_bL28_bact-type"/>
</dbReference>
<dbReference type="InterPro" id="IPR037147">
    <property type="entry name" value="Ribosomal_bL28_sf"/>
</dbReference>
<dbReference type="NCBIfam" id="TIGR00009">
    <property type="entry name" value="L28"/>
    <property type="match status" value="1"/>
</dbReference>
<dbReference type="PANTHER" id="PTHR39080">
    <property type="entry name" value="50S RIBOSOMAL PROTEIN L28"/>
    <property type="match status" value="1"/>
</dbReference>
<dbReference type="PANTHER" id="PTHR39080:SF1">
    <property type="entry name" value="LARGE RIBOSOMAL SUBUNIT PROTEIN BL28A"/>
    <property type="match status" value="1"/>
</dbReference>
<dbReference type="Pfam" id="PF00830">
    <property type="entry name" value="Ribosomal_L28"/>
    <property type="match status" value="1"/>
</dbReference>
<dbReference type="SUPFAM" id="SSF143800">
    <property type="entry name" value="L28p-like"/>
    <property type="match status" value="1"/>
</dbReference>
<feature type="chain" id="PRO_1000195935" description="Large ribosomal subunit protein bL28">
    <location>
        <begin position="1"/>
        <end position="62"/>
    </location>
</feature>
<proteinExistence type="inferred from homology"/>
<accession>B3QZS8</accession>
<protein>
    <recommendedName>
        <fullName evidence="1">Large ribosomal subunit protein bL28</fullName>
    </recommendedName>
    <alternativeName>
        <fullName evidence="2">50S ribosomal protein L28</fullName>
    </alternativeName>
</protein>
<organism>
    <name type="scientific">Phytoplasma mali (strain AT)</name>
    <dbReference type="NCBI Taxonomy" id="482235"/>
    <lineage>
        <taxon>Bacteria</taxon>
        <taxon>Bacillati</taxon>
        <taxon>Mycoplasmatota</taxon>
        <taxon>Mollicutes</taxon>
        <taxon>Acholeplasmatales</taxon>
        <taxon>Acholeplasmataceae</taxon>
        <taxon>Candidatus Phytoplasma</taxon>
        <taxon>16SrX (Apple proliferation group)</taxon>
    </lineage>
</organism>
<comment type="similarity">
    <text evidence="1">Belongs to the bacterial ribosomal protein bL28 family.</text>
</comment>
<gene>
    <name evidence="1" type="primary">rpmB</name>
    <name type="ordered locus">ATP_00278</name>
</gene>
<name>RL28_PHYMT</name>
<sequence length="62" mass="7294">MGRCYISQKSTLFGNKRSHSMNAIKRIWKTNLQSIRIEDENGKIKKIKISARSLKKLNFKRV</sequence>
<keyword id="KW-1185">Reference proteome</keyword>
<keyword id="KW-0687">Ribonucleoprotein</keyword>
<keyword id="KW-0689">Ribosomal protein</keyword>
<evidence type="ECO:0000255" key="1">
    <source>
        <dbReference type="HAMAP-Rule" id="MF_00373"/>
    </source>
</evidence>
<evidence type="ECO:0000305" key="2"/>